<comment type="function">
    <text>Required for the morphogenesis and for the elongation of the flagellar filament by facilitating polymerization of the flagellin monomers at the tip of growing filament. Forms a capping structure, which prevents flagellin subunits (transported through the central channel of the flagellum) from leaking out without polymerization at the distal end.</text>
</comment>
<comment type="subunit">
    <text evidence="3">Homopentamer.</text>
</comment>
<comment type="interaction">
    <interactant intactId="EBI-1126352">
        <id>P24216</id>
    </interactant>
    <interactant intactId="EBI-1114780">
        <id>P0ABY2</id>
        <label>fliT</label>
    </interactant>
    <organismsDiffer>false</organismsDiffer>
    <experiments>4</experiments>
</comment>
<comment type="subcellular location">
    <subcellularLocation>
        <location>Secreted</location>
    </subcellularLocation>
    <subcellularLocation>
        <location>Bacterial flagellum</location>
    </subcellularLocation>
</comment>
<comment type="similarity">
    <text evidence="3">Belongs to the FliD family.</text>
</comment>
<feature type="initiator methionine" description="Removed" evidence="1">
    <location>
        <position position="1"/>
    </location>
</feature>
<feature type="chain" id="PRO_0000177017" description="Flagellar hook-associated protein 2">
    <location>
        <begin position="2"/>
        <end position="468"/>
    </location>
</feature>
<feature type="coiled-coil region" evidence="2">
    <location>
        <begin position="411"/>
        <end position="439"/>
    </location>
</feature>
<feature type="sequence conflict" description="In Ref. 1; AAA23790." evidence="3" ref="1">
    <original>R</original>
    <variation>T</variation>
    <location>
        <position position="114"/>
    </location>
</feature>
<feature type="helix" evidence="4">
    <location>
        <begin position="45"/>
        <end position="64"/>
    </location>
</feature>
<feature type="helix" evidence="4">
    <location>
        <begin position="67"/>
        <end position="71"/>
    </location>
</feature>
<feature type="strand" evidence="5">
    <location>
        <begin position="73"/>
        <end position="78"/>
    </location>
</feature>
<feature type="strand" evidence="5">
    <location>
        <begin position="82"/>
        <end position="86"/>
    </location>
</feature>
<feature type="strand" evidence="5">
    <location>
        <begin position="93"/>
        <end position="101"/>
    </location>
</feature>
<feature type="strand" evidence="5">
    <location>
        <begin position="107"/>
        <end position="112"/>
    </location>
</feature>
<feature type="strand" evidence="5">
    <location>
        <begin position="117"/>
        <end position="119"/>
    </location>
</feature>
<feature type="strand" evidence="5">
    <location>
        <begin position="126"/>
        <end position="133"/>
    </location>
</feature>
<feature type="strand" evidence="5">
    <location>
        <begin position="139"/>
        <end position="143"/>
    </location>
</feature>
<feature type="helix" evidence="4">
    <location>
        <begin position="145"/>
        <end position="147"/>
    </location>
</feature>
<feature type="helix" evidence="5">
    <location>
        <begin position="150"/>
        <end position="160"/>
    </location>
</feature>
<feature type="strand" evidence="5">
    <location>
        <begin position="163"/>
        <end position="172"/>
    </location>
</feature>
<feature type="strand" evidence="5">
    <location>
        <begin position="175"/>
        <end position="184"/>
    </location>
</feature>
<feature type="helix" evidence="5">
    <location>
        <begin position="187"/>
        <end position="189"/>
    </location>
</feature>
<feature type="strand" evidence="5">
    <location>
        <begin position="191"/>
        <end position="197"/>
    </location>
</feature>
<feature type="helix" evidence="5">
    <location>
        <begin position="199"/>
        <end position="205"/>
    </location>
</feature>
<feature type="strand" evidence="5">
    <location>
        <begin position="211"/>
        <end position="213"/>
    </location>
</feature>
<feature type="strand" evidence="5">
    <location>
        <begin position="215"/>
        <end position="220"/>
    </location>
</feature>
<feature type="strand" evidence="5">
    <location>
        <begin position="225"/>
        <end position="229"/>
    </location>
</feature>
<feature type="strand" evidence="5">
    <location>
        <begin position="232"/>
        <end position="237"/>
    </location>
</feature>
<feature type="strand" evidence="5">
    <location>
        <begin position="239"/>
        <end position="245"/>
    </location>
</feature>
<feature type="strand" evidence="5">
    <location>
        <begin position="248"/>
        <end position="252"/>
    </location>
</feature>
<feature type="strand" evidence="5">
    <location>
        <begin position="261"/>
        <end position="266"/>
    </location>
</feature>
<feature type="helix" evidence="4">
    <location>
        <begin position="269"/>
        <end position="293"/>
    </location>
</feature>
<feature type="helix" evidence="4">
    <location>
        <begin position="316"/>
        <end position="330"/>
    </location>
</feature>
<feature type="strand" evidence="4">
    <location>
        <begin position="335"/>
        <end position="337"/>
    </location>
</feature>
<feature type="helix" evidence="4">
    <location>
        <begin position="341"/>
        <end position="344"/>
    </location>
</feature>
<feature type="strand" evidence="4">
    <location>
        <begin position="346"/>
        <end position="348"/>
    </location>
</feature>
<feature type="turn" evidence="4">
    <location>
        <begin position="350"/>
        <end position="352"/>
    </location>
</feature>
<feature type="strand" evidence="4">
    <location>
        <begin position="355"/>
        <end position="357"/>
    </location>
</feature>
<feature type="helix" evidence="4">
    <location>
        <begin position="359"/>
        <end position="377"/>
    </location>
</feature>
<feature type="turn" evidence="4">
    <location>
        <begin position="378"/>
        <end position="380"/>
    </location>
</feature>
<feature type="strand" evidence="4">
    <location>
        <begin position="381"/>
        <end position="383"/>
    </location>
</feature>
<feature type="helix" evidence="4">
    <location>
        <begin position="386"/>
        <end position="398"/>
    </location>
</feature>
<feature type="helix" evidence="4">
    <location>
        <begin position="403"/>
        <end position="410"/>
    </location>
</feature>
<organism>
    <name type="scientific">Escherichia coli (strain K12)</name>
    <dbReference type="NCBI Taxonomy" id="83333"/>
    <lineage>
        <taxon>Bacteria</taxon>
        <taxon>Pseudomonadati</taxon>
        <taxon>Pseudomonadota</taxon>
        <taxon>Gammaproteobacteria</taxon>
        <taxon>Enterobacterales</taxon>
        <taxon>Enterobacteriaceae</taxon>
        <taxon>Escherichia</taxon>
    </lineage>
</organism>
<dbReference type="EMBL" id="M85240">
    <property type="protein sequence ID" value="AAA23790.1"/>
    <property type="molecule type" value="Genomic_DNA"/>
</dbReference>
<dbReference type="EMBL" id="U00096">
    <property type="protein sequence ID" value="AAC74991.1"/>
    <property type="molecule type" value="Genomic_DNA"/>
</dbReference>
<dbReference type="EMBL" id="AP009048">
    <property type="protein sequence ID" value="BAA15752.2"/>
    <property type="molecule type" value="Genomic_DNA"/>
</dbReference>
<dbReference type="EMBL" id="X17440">
    <property type="protein sequence ID" value="CAA35487.1"/>
    <property type="molecule type" value="Genomic_DNA"/>
</dbReference>
<dbReference type="EMBL" id="J01607">
    <property type="protein sequence ID" value="AAA92490.1"/>
    <property type="molecule type" value="Genomic_DNA"/>
</dbReference>
<dbReference type="PIR" id="A64956">
    <property type="entry name" value="A64956"/>
</dbReference>
<dbReference type="RefSeq" id="NP_416434.1">
    <property type="nucleotide sequence ID" value="NC_000913.3"/>
</dbReference>
<dbReference type="RefSeq" id="WP_000146784.1">
    <property type="nucleotide sequence ID" value="NZ_LN832404.1"/>
</dbReference>
<dbReference type="PDB" id="5H5V">
    <property type="method" value="X-ray"/>
    <property type="resolution" value="3.00 A"/>
    <property type="chains" value="A/B/C/D/E/F=43-416"/>
</dbReference>
<dbReference type="PDB" id="5H5W">
    <property type="method" value="X-ray"/>
    <property type="resolution" value="2.15 A"/>
    <property type="chains" value="A/B=71-267"/>
</dbReference>
<dbReference type="PDBsum" id="5H5V"/>
<dbReference type="PDBsum" id="5H5W"/>
<dbReference type="SMR" id="P24216"/>
<dbReference type="BioGRID" id="4260370">
    <property type="interactions" value="12"/>
</dbReference>
<dbReference type="BioGRID" id="850785">
    <property type="interactions" value="1"/>
</dbReference>
<dbReference type="FunCoup" id="P24216">
    <property type="interactions" value="57"/>
</dbReference>
<dbReference type="IntAct" id="P24216">
    <property type="interactions" value="8"/>
</dbReference>
<dbReference type="STRING" id="511145.b1924"/>
<dbReference type="PaxDb" id="511145-b1924"/>
<dbReference type="DNASU" id="946428"/>
<dbReference type="EnsemblBacteria" id="AAC74991">
    <property type="protein sequence ID" value="AAC74991"/>
    <property type="gene ID" value="b1924"/>
</dbReference>
<dbReference type="GeneID" id="75205830"/>
<dbReference type="GeneID" id="946428"/>
<dbReference type="KEGG" id="ecj:JW1909"/>
<dbReference type="KEGG" id="eco:b1924"/>
<dbReference type="KEGG" id="ecoc:C3026_10915"/>
<dbReference type="PATRIC" id="fig|1411691.4.peg.325"/>
<dbReference type="EchoBASE" id="EB0834"/>
<dbReference type="eggNOG" id="COG1345">
    <property type="taxonomic scope" value="Bacteria"/>
</dbReference>
<dbReference type="InParanoid" id="P24216"/>
<dbReference type="OMA" id="GGRQQIW"/>
<dbReference type="OrthoDB" id="5980200at2"/>
<dbReference type="PhylomeDB" id="P24216"/>
<dbReference type="BioCyc" id="EcoCyc:EG10841-MONOMER"/>
<dbReference type="PHI-base" id="PHI:6733"/>
<dbReference type="PRO" id="PR:P24216"/>
<dbReference type="Proteomes" id="UP000000625">
    <property type="component" value="Chromosome"/>
</dbReference>
<dbReference type="GO" id="GO:0009421">
    <property type="term" value="C:bacterial-type flagellum filament cap"/>
    <property type="evidence" value="ECO:0000318"/>
    <property type="project" value="GO_Central"/>
</dbReference>
<dbReference type="GO" id="GO:0009424">
    <property type="term" value="C:bacterial-type flagellum hook"/>
    <property type="evidence" value="ECO:0007669"/>
    <property type="project" value="InterPro"/>
</dbReference>
<dbReference type="GO" id="GO:0005576">
    <property type="term" value="C:extracellular region"/>
    <property type="evidence" value="ECO:0007669"/>
    <property type="project" value="UniProtKB-SubCell"/>
</dbReference>
<dbReference type="GO" id="GO:0071973">
    <property type="term" value="P:bacterial-type flagellum-dependent cell motility"/>
    <property type="evidence" value="ECO:0000315"/>
    <property type="project" value="EcoCyc"/>
</dbReference>
<dbReference type="GO" id="GO:0007155">
    <property type="term" value="P:cell adhesion"/>
    <property type="evidence" value="ECO:0007669"/>
    <property type="project" value="InterPro"/>
</dbReference>
<dbReference type="InterPro" id="IPR040026">
    <property type="entry name" value="FliD"/>
</dbReference>
<dbReference type="InterPro" id="IPR010809">
    <property type="entry name" value="FliD_C"/>
</dbReference>
<dbReference type="InterPro" id="IPR003481">
    <property type="entry name" value="FliD_N"/>
</dbReference>
<dbReference type="NCBIfam" id="NF005955">
    <property type="entry name" value="PRK08032.1"/>
    <property type="match status" value="1"/>
</dbReference>
<dbReference type="PANTHER" id="PTHR30288">
    <property type="entry name" value="FLAGELLAR CAP/ASSEMBLY PROTEIN FLID"/>
    <property type="match status" value="1"/>
</dbReference>
<dbReference type="PANTHER" id="PTHR30288:SF0">
    <property type="entry name" value="FLAGELLAR HOOK-ASSOCIATED PROTEIN 2"/>
    <property type="match status" value="1"/>
</dbReference>
<dbReference type="Pfam" id="PF07195">
    <property type="entry name" value="FliD_C"/>
    <property type="match status" value="1"/>
</dbReference>
<dbReference type="Pfam" id="PF02465">
    <property type="entry name" value="FliD_N"/>
    <property type="match status" value="1"/>
</dbReference>
<protein>
    <recommendedName>
        <fullName>Flagellar hook-associated protein 2</fullName>
        <shortName>HAP2</shortName>
    </recommendedName>
    <alternativeName>
        <fullName>Filament cap protein</fullName>
    </alternativeName>
    <alternativeName>
        <fullName>Flagellar cap protein</fullName>
    </alternativeName>
</protein>
<reference key="1">
    <citation type="journal article" date="1992" name="J. Gen. Microbiol.">
        <title>Subdivision of flagellar region III of the Escherichia coli and Salmonella typhimurium chromosomes and identification of two additional flagellar genes.</title>
        <authorList>
            <person name="Kawagishi I."/>
            <person name="Mueller V."/>
            <person name="Williams A.W."/>
            <person name="Irikura V.M."/>
            <person name="Macnab R.M."/>
        </authorList>
    </citation>
    <scope>NUCLEOTIDE SEQUENCE [GENOMIC DNA]</scope>
    <source>
        <strain>JA11</strain>
    </source>
</reference>
<reference key="2">
    <citation type="journal article" date="1996" name="DNA Res.">
        <title>A 460-kb DNA sequence of the Escherichia coli K-12 genome corresponding to the 40.1-50.0 min region on the linkage map.</title>
        <authorList>
            <person name="Itoh T."/>
            <person name="Aiba H."/>
            <person name="Baba T."/>
            <person name="Fujita K."/>
            <person name="Hayashi K."/>
            <person name="Inada T."/>
            <person name="Isono K."/>
            <person name="Kasai H."/>
            <person name="Kimura S."/>
            <person name="Kitakawa M."/>
            <person name="Kitagawa M."/>
            <person name="Makino K."/>
            <person name="Miki T."/>
            <person name="Mizobuchi K."/>
            <person name="Mori H."/>
            <person name="Mori T."/>
            <person name="Motomura K."/>
            <person name="Nakade S."/>
            <person name="Nakamura Y."/>
            <person name="Nashimoto H."/>
            <person name="Nishio Y."/>
            <person name="Oshima T."/>
            <person name="Saito N."/>
            <person name="Sampei G."/>
            <person name="Seki Y."/>
            <person name="Sivasundaram S."/>
            <person name="Tagami H."/>
            <person name="Takeda J."/>
            <person name="Takemoto K."/>
            <person name="Wada C."/>
            <person name="Yamamoto Y."/>
            <person name="Horiuchi T."/>
        </authorList>
    </citation>
    <scope>NUCLEOTIDE SEQUENCE [LARGE SCALE GENOMIC DNA]</scope>
    <source>
        <strain>K12 / W3110 / ATCC 27325 / DSM 5911</strain>
    </source>
</reference>
<reference key="3">
    <citation type="journal article" date="1997" name="Science">
        <title>The complete genome sequence of Escherichia coli K-12.</title>
        <authorList>
            <person name="Blattner F.R."/>
            <person name="Plunkett G. III"/>
            <person name="Bloch C.A."/>
            <person name="Perna N.T."/>
            <person name="Burland V."/>
            <person name="Riley M."/>
            <person name="Collado-Vides J."/>
            <person name="Glasner J.D."/>
            <person name="Rode C.K."/>
            <person name="Mayhew G.F."/>
            <person name="Gregor J."/>
            <person name="Davis N.W."/>
            <person name="Kirkpatrick H.A."/>
            <person name="Goeden M.A."/>
            <person name="Rose D.J."/>
            <person name="Mau B."/>
            <person name="Shao Y."/>
        </authorList>
    </citation>
    <scope>NUCLEOTIDE SEQUENCE [LARGE SCALE GENOMIC DNA]</scope>
    <source>
        <strain>K12 / MG1655 / ATCC 47076</strain>
    </source>
</reference>
<reference key="4">
    <citation type="journal article" date="2006" name="Mol. Syst. Biol.">
        <title>Highly accurate genome sequences of Escherichia coli K-12 strains MG1655 and W3110.</title>
        <authorList>
            <person name="Hayashi K."/>
            <person name="Morooka N."/>
            <person name="Yamamoto Y."/>
            <person name="Fujita K."/>
            <person name="Isono K."/>
            <person name="Choi S."/>
            <person name="Ohtsubo E."/>
            <person name="Baba T."/>
            <person name="Wanner B.L."/>
            <person name="Mori H."/>
            <person name="Horiuchi T."/>
        </authorList>
    </citation>
    <scope>NUCLEOTIDE SEQUENCE [LARGE SCALE GENOMIC DNA]</scope>
    <source>
        <strain>K12 / W3110 / ATCC 27325 / DSM 5911</strain>
    </source>
</reference>
<reference key="5">
    <citation type="journal article" date="1989" name="Mol. Gen. Genet.">
        <title>Isolation and characterization of Escherichia coli hag operator mutants whose hag48 expression has become repressible by a Salmonella H1 repressor.</title>
        <authorList>
            <person name="Hanafusa T."/>
            <person name="Sakai A."/>
            <person name="Tominaga A."/>
            <person name="Enomoto M."/>
        </authorList>
    </citation>
    <scope>NUCLEOTIDE SEQUENCE [GENOMIC DNA] OF 1-153</scope>
    <source>
        <strain>K12</strain>
    </source>
</reference>
<reference key="6">
    <citation type="journal article" date="1983" name="J. Bacteriol.">
        <title>DNA sequence adjacent to flagellar genes and evolution of flagellar-phase variation.</title>
        <authorList>
            <person name="Szekely E."/>
            <person name="Simon M."/>
        </authorList>
    </citation>
    <scope>NUCLEOTIDE SEQUENCE [GENOMIC DNA] OF 1-9</scope>
</reference>
<keyword id="KW-0002">3D-structure</keyword>
<keyword id="KW-0975">Bacterial flagellum</keyword>
<keyword id="KW-0175">Coiled coil</keyword>
<keyword id="KW-1185">Reference proteome</keyword>
<keyword id="KW-0964">Secreted</keyword>
<proteinExistence type="evidence at protein level"/>
<evidence type="ECO:0000250" key="1"/>
<evidence type="ECO:0000255" key="2"/>
<evidence type="ECO:0000305" key="3"/>
<evidence type="ECO:0007829" key="4">
    <source>
        <dbReference type="PDB" id="5H5V"/>
    </source>
</evidence>
<evidence type="ECO:0007829" key="5">
    <source>
        <dbReference type="PDB" id="5H5W"/>
    </source>
</evidence>
<name>FLID_ECOLI</name>
<accession>P24216</accession>
<accession>P94745</accession>
<gene>
    <name type="primary">fliD</name>
    <name type="synonym">flaV</name>
    <name type="synonym">flbC</name>
    <name type="ordered locus">b1924</name>
    <name type="ordered locus">JW1909</name>
</gene>
<sequence length="468" mass="48456">MASISSLGVGSGLDLSSILDSLTAAQKATLTPISNQQSSFTAKLSAYGTLKSALTTFQTANTALSKADLFSATSTTSSTTAFSATTAGNAIAGKYTISVTHLAQAQTLTTRTTRDDTKTAIATSDSKLTIQQGGDKDPITIDISAANSSLSGIRDAINNAKAGVSASIINVGNGEYRLSVTSNDTGLDNAMTLSVSGDDALQSFMGYDASASSNGMEVSVAAQNAQLTVNNVAIENSSNTISDALENITLNLNDVTTGNQTLTITQDTSKAQTAIKDWVNAYNSLIDTFSSLTKYTAVDAGADSQSSSNGALLGDSTLRTIQTQLKSMLSNTVSSSSYKTLAQIGITTDPSDGKLELDADKLTAALKKDASGVGALIVGDGKKTGITTTIGSNLTSWLSTTGIIKAATDGVSKTLNKLTKDYNAASDRIDAQVARYKEQFTQLDVLMTSLNSTSSYLTQQFENNSNSK</sequence>